<name>HBB_MANSP</name>
<dbReference type="PIR" id="S00540">
    <property type="entry name" value="HBBAM"/>
</dbReference>
<dbReference type="SMR" id="P08259"/>
<dbReference type="GO" id="GO:0072562">
    <property type="term" value="C:blood microparticle"/>
    <property type="evidence" value="ECO:0007669"/>
    <property type="project" value="TreeGrafter"/>
</dbReference>
<dbReference type="GO" id="GO:0031838">
    <property type="term" value="C:haptoglobin-hemoglobin complex"/>
    <property type="evidence" value="ECO:0007669"/>
    <property type="project" value="TreeGrafter"/>
</dbReference>
<dbReference type="GO" id="GO:0005833">
    <property type="term" value="C:hemoglobin complex"/>
    <property type="evidence" value="ECO:0007669"/>
    <property type="project" value="InterPro"/>
</dbReference>
<dbReference type="GO" id="GO:0031720">
    <property type="term" value="F:haptoglobin binding"/>
    <property type="evidence" value="ECO:0007669"/>
    <property type="project" value="TreeGrafter"/>
</dbReference>
<dbReference type="GO" id="GO:0020037">
    <property type="term" value="F:heme binding"/>
    <property type="evidence" value="ECO:0007669"/>
    <property type="project" value="InterPro"/>
</dbReference>
<dbReference type="GO" id="GO:0031721">
    <property type="term" value="F:hemoglobin alpha binding"/>
    <property type="evidence" value="ECO:0007669"/>
    <property type="project" value="TreeGrafter"/>
</dbReference>
<dbReference type="GO" id="GO:0046872">
    <property type="term" value="F:metal ion binding"/>
    <property type="evidence" value="ECO:0007669"/>
    <property type="project" value="UniProtKB-KW"/>
</dbReference>
<dbReference type="GO" id="GO:0043177">
    <property type="term" value="F:organic acid binding"/>
    <property type="evidence" value="ECO:0007669"/>
    <property type="project" value="TreeGrafter"/>
</dbReference>
<dbReference type="GO" id="GO:0019825">
    <property type="term" value="F:oxygen binding"/>
    <property type="evidence" value="ECO:0007669"/>
    <property type="project" value="InterPro"/>
</dbReference>
<dbReference type="GO" id="GO:0005344">
    <property type="term" value="F:oxygen carrier activity"/>
    <property type="evidence" value="ECO:0007669"/>
    <property type="project" value="UniProtKB-KW"/>
</dbReference>
<dbReference type="GO" id="GO:0004601">
    <property type="term" value="F:peroxidase activity"/>
    <property type="evidence" value="ECO:0007669"/>
    <property type="project" value="TreeGrafter"/>
</dbReference>
<dbReference type="GO" id="GO:0042744">
    <property type="term" value="P:hydrogen peroxide catabolic process"/>
    <property type="evidence" value="ECO:0007669"/>
    <property type="project" value="TreeGrafter"/>
</dbReference>
<dbReference type="CDD" id="cd08925">
    <property type="entry name" value="Hb-beta-like"/>
    <property type="match status" value="1"/>
</dbReference>
<dbReference type="FunFam" id="1.10.490.10:FF:000001">
    <property type="entry name" value="Hemoglobin subunit beta"/>
    <property type="match status" value="1"/>
</dbReference>
<dbReference type="Gene3D" id="1.10.490.10">
    <property type="entry name" value="Globins"/>
    <property type="match status" value="1"/>
</dbReference>
<dbReference type="InterPro" id="IPR000971">
    <property type="entry name" value="Globin"/>
</dbReference>
<dbReference type="InterPro" id="IPR009050">
    <property type="entry name" value="Globin-like_sf"/>
</dbReference>
<dbReference type="InterPro" id="IPR012292">
    <property type="entry name" value="Globin/Proto"/>
</dbReference>
<dbReference type="InterPro" id="IPR002337">
    <property type="entry name" value="Hemoglobin_b"/>
</dbReference>
<dbReference type="InterPro" id="IPR050056">
    <property type="entry name" value="Hemoglobin_oxygen_transport"/>
</dbReference>
<dbReference type="PANTHER" id="PTHR11442">
    <property type="entry name" value="HEMOGLOBIN FAMILY MEMBER"/>
    <property type="match status" value="1"/>
</dbReference>
<dbReference type="PANTHER" id="PTHR11442:SF42">
    <property type="entry name" value="HEMOGLOBIN SUBUNIT BETA"/>
    <property type="match status" value="1"/>
</dbReference>
<dbReference type="Pfam" id="PF00042">
    <property type="entry name" value="Globin"/>
    <property type="match status" value="1"/>
</dbReference>
<dbReference type="PRINTS" id="PR00814">
    <property type="entry name" value="BETAHAEM"/>
</dbReference>
<dbReference type="SUPFAM" id="SSF46458">
    <property type="entry name" value="Globin-like"/>
    <property type="match status" value="1"/>
</dbReference>
<dbReference type="PROSITE" id="PS01033">
    <property type="entry name" value="GLOBIN"/>
    <property type="match status" value="1"/>
</dbReference>
<protein>
    <recommendedName>
        <fullName>Hemoglobin subunit beta</fullName>
    </recommendedName>
    <alternativeName>
        <fullName>Beta-globin</fullName>
    </alternativeName>
    <alternativeName>
        <fullName>Hemoglobin beta chain</fullName>
    </alternativeName>
</protein>
<organism>
    <name type="scientific">Mandrillus sphinx</name>
    <name type="common">Mandrill</name>
    <name type="synonym">Papio sphinx</name>
    <dbReference type="NCBI Taxonomy" id="9561"/>
    <lineage>
        <taxon>Eukaryota</taxon>
        <taxon>Metazoa</taxon>
        <taxon>Chordata</taxon>
        <taxon>Craniata</taxon>
        <taxon>Vertebrata</taxon>
        <taxon>Euteleostomi</taxon>
        <taxon>Mammalia</taxon>
        <taxon>Eutheria</taxon>
        <taxon>Euarchontoglires</taxon>
        <taxon>Primates</taxon>
        <taxon>Haplorrhini</taxon>
        <taxon>Catarrhini</taxon>
        <taxon>Cercopithecidae</taxon>
        <taxon>Cercopithecinae</taxon>
        <taxon>Mandrillus</taxon>
    </lineage>
</organism>
<feature type="chain" id="PRO_0000053008" description="Hemoglobin subunit beta">
    <location>
        <begin position="1"/>
        <end position="146"/>
    </location>
</feature>
<feature type="domain" description="Globin" evidence="3">
    <location>
        <begin position="2"/>
        <end position="146"/>
    </location>
</feature>
<feature type="binding site" description="distal binding residue">
    <location>
        <position position="63"/>
    </location>
    <ligand>
        <name>heme b</name>
        <dbReference type="ChEBI" id="CHEBI:60344"/>
    </ligand>
    <ligandPart>
        <name>Fe</name>
        <dbReference type="ChEBI" id="CHEBI:18248"/>
    </ligandPart>
</feature>
<feature type="binding site" description="proximal binding residue">
    <location>
        <position position="92"/>
    </location>
    <ligand>
        <name>heme b</name>
        <dbReference type="ChEBI" id="CHEBI:60344"/>
    </ligand>
    <ligandPart>
        <name>Fe</name>
        <dbReference type="ChEBI" id="CHEBI:18248"/>
    </ligandPart>
</feature>
<feature type="modified residue" description="N-acetylvaline" evidence="1">
    <location>
        <position position="1"/>
    </location>
</feature>
<feature type="modified residue" description="Phosphothreonine" evidence="2">
    <location>
        <position position="12"/>
    </location>
</feature>
<feature type="modified residue" description="Phosphoserine" evidence="2">
    <location>
        <position position="44"/>
    </location>
</feature>
<feature type="modified residue" description="N6-acetyllysine" evidence="2">
    <location>
        <position position="59"/>
    </location>
</feature>
<feature type="modified residue" description="N6-acetyllysine" evidence="2">
    <location>
        <position position="82"/>
    </location>
</feature>
<feature type="modified residue" description="S-nitrosocysteine" evidence="2">
    <location>
        <position position="93"/>
    </location>
</feature>
<feature type="modified residue" description="N6-acetyllysine" evidence="2">
    <location>
        <position position="144"/>
    </location>
</feature>
<reference key="1">
    <citation type="journal article" date="1988" name="Biol. Chem. Hoppe-Seyler">
        <title>The primary structure of the mandrill (Mandrillus sphinx, Primates) hemoglobin.</title>
        <authorList>
            <person name="Lin H.-X."/>
            <person name="Kleinschmidt T."/>
            <person name="Braunitzer G."/>
            <person name="Goltenboth R."/>
        </authorList>
    </citation>
    <scope>PROTEIN SEQUENCE</scope>
</reference>
<gene>
    <name type="primary">HBB</name>
</gene>
<sequence>VHLTPEEKTAVTTLWGKVNVDEVGGEALGRLLVVYPWTQRFFDSFGDLSSPDAVMGNPKVKAHGKKVLGAFSDGLNHLDNLKGTFAQLSELHCDKLHVDPENFKLLGNVLVCVLAHHFGKEFTPQVQAAYQKVVAGVANALAHKYH</sequence>
<evidence type="ECO:0000250" key="1">
    <source>
        <dbReference type="UniProtKB" id="P02086"/>
    </source>
</evidence>
<evidence type="ECO:0000250" key="2">
    <source>
        <dbReference type="UniProtKB" id="P68871"/>
    </source>
</evidence>
<evidence type="ECO:0000255" key="3">
    <source>
        <dbReference type="PROSITE-ProRule" id="PRU00238"/>
    </source>
</evidence>
<accession>P08259</accession>
<keyword id="KW-0007">Acetylation</keyword>
<keyword id="KW-0903">Direct protein sequencing</keyword>
<keyword id="KW-0349">Heme</keyword>
<keyword id="KW-0408">Iron</keyword>
<keyword id="KW-0479">Metal-binding</keyword>
<keyword id="KW-0561">Oxygen transport</keyword>
<keyword id="KW-0597">Phosphoprotein</keyword>
<keyword id="KW-0702">S-nitrosylation</keyword>
<keyword id="KW-0813">Transport</keyword>
<proteinExistence type="evidence at protein level"/>
<comment type="function">
    <text>Involved in oxygen transport from the lung to the various peripheral tissues.</text>
</comment>
<comment type="subunit">
    <text>Heterotetramer of two alpha chains and two beta chains.</text>
</comment>
<comment type="tissue specificity">
    <text>Red blood cells.</text>
</comment>
<comment type="similarity">
    <text evidence="3">Belongs to the globin family.</text>
</comment>